<proteinExistence type="inferred from homology"/>
<feature type="chain" id="PRO_0000163514" description="Large ribosomal subunit protein bL19">
    <location>
        <begin position="1"/>
        <end position="181"/>
    </location>
</feature>
<feature type="region of interest" description="Disordered" evidence="2">
    <location>
        <begin position="162"/>
        <end position="181"/>
    </location>
</feature>
<feature type="compositionally biased region" description="Basic and acidic residues" evidence="2">
    <location>
        <begin position="162"/>
        <end position="173"/>
    </location>
</feature>
<reference key="1">
    <citation type="journal article" date="2000" name="DNA Res.">
        <title>Complete genome structure of the nitrogen-fixing symbiotic bacterium Mesorhizobium loti.</title>
        <authorList>
            <person name="Kaneko T."/>
            <person name="Nakamura Y."/>
            <person name="Sato S."/>
            <person name="Asamizu E."/>
            <person name="Kato T."/>
            <person name="Sasamoto S."/>
            <person name="Watanabe A."/>
            <person name="Idesawa K."/>
            <person name="Ishikawa A."/>
            <person name="Kawashima K."/>
            <person name="Kimura T."/>
            <person name="Kishida Y."/>
            <person name="Kiyokawa C."/>
            <person name="Kohara M."/>
            <person name="Matsumoto M."/>
            <person name="Matsuno A."/>
            <person name="Mochizuki Y."/>
            <person name="Nakayama S."/>
            <person name="Nakazaki N."/>
            <person name="Shimpo S."/>
            <person name="Sugimoto M."/>
            <person name="Takeuchi C."/>
            <person name="Yamada M."/>
            <person name="Tabata S."/>
        </authorList>
    </citation>
    <scope>NUCLEOTIDE SEQUENCE [LARGE SCALE GENOMIC DNA]</scope>
    <source>
        <strain>LMG 29417 / CECT 9101 / MAFF 303099</strain>
    </source>
</reference>
<comment type="function">
    <text evidence="1">This protein is located at the 30S-50S ribosomal subunit interface and may play a role in the structure and function of the aminoacyl-tRNA binding site.</text>
</comment>
<comment type="similarity">
    <text evidence="1">Belongs to the bacterial ribosomal protein bL19 family.</text>
</comment>
<dbReference type="EMBL" id="BA000012">
    <property type="protein sequence ID" value="BAB50976.1"/>
    <property type="molecule type" value="Genomic_DNA"/>
</dbReference>
<dbReference type="RefSeq" id="WP_010912318.1">
    <property type="nucleotide sequence ID" value="NC_002678.2"/>
</dbReference>
<dbReference type="SMR" id="P58168"/>
<dbReference type="GeneID" id="66681269"/>
<dbReference type="KEGG" id="mlo:mll4283"/>
<dbReference type="eggNOG" id="COG0335">
    <property type="taxonomic scope" value="Bacteria"/>
</dbReference>
<dbReference type="HOGENOM" id="CLU_103507_0_2_5"/>
<dbReference type="Proteomes" id="UP000000552">
    <property type="component" value="Chromosome"/>
</dbReference>
<dbReference type="GO" id="GO:0022625">
    <property type="term" value="C:cytosolic large ribosomal subunit"/>
    <property type="evidence" value="ECO:0007669"/>
    <property type="project" value="TreeGrafter"/>
</dbReference>
<dbReference type="GO" id="GO:0003735">
    <property type="term" value="F:structural constituent of ribosome"/>
    <property type="evidence" value="ECO:0007669"/>
    <property type="project" value="InterPro"/>
</dbReference>
<dbReference type="GO" id="GO:0006412">
    <property type="term" value="P:translation"/>
    <property type="evidence" value="ECO:0007669"/>
    <property type="project" value="UniProtKB-UniRule"/>
</dbReference>
<dbReference type="FunFam" id="2.30.30.790:FF:000001">
    <property type="entry name" value="50S ribosomal protein L19"/>
    <property type="match status" value="1"/>
</dbReference>
<dbReference type="Gene3D" id="2.30.30.790">
    <property type="match status" value="1"/>
</dbReference>
<dbReference type="HAMAP" id="MF_00402">
    <property type="entry name" value="Ribosomal_bL19"/>
    <property type="match status" value="1"/>
</dbReference>
<dbReference type="InterPro" id="IPR001857">
    <property type="entry name" value="Ribosomal_bL19"/>
</dbReference>
<dbReference type="InterPro" id="IPR018257">
    <property type="entry name" value="Ribosomal_bL19_CS"/>
</dbReference>
<dbReference type="InterPro" id="IPR038657">
    <property type="entry name" value="Ribosomal_bL19_sf"/>
</dbReference>
<dbReference type="InterPro" id="IPR008991">
    <property type="entry name" value="Translation_prot_SH3-like_sf"/>
</dbReference>
<dbReference type="NCBIfam" id="TIGR01024">
    <property type="entry name" value="rplS_bact"/>
    <property type="match status" value="1"/>
</dbReference>
<dbReference type="PANTHER" id="PTHR15680:SF9">
    <property type="entry name" value="LARGE RIBOSOMAL SUBUNIT PROTEIN BL19M"/>
    <property type="match status" value="1"/>
</dbReference>
<dbReference type="PANTHER" id="PTHR15680">
    <property type="entry name" value="RIBOSOMAL PROTEIN L19"/>
    <property type="match status" value="1"/>
</dbReference>
<dbReference type="Pfam" id="PF01245">
    <property type="entry name" value="Ribosomal_L19"/>
    <property type="match status" value="1"/>
</dbReference>
<dbReference type="PRINTS" id="PR00061">
    <property type="entry name" value="RIBOSOMALL19"/>
</dbReference>
<dbReference type="SUPFAM" id="SSF50104">
    <property type="entry name" value="Translation proteins SH3-like domain"/>
    <property type="match status" value="1"/>
</dbReference>
<dbReference type="PROSITE" id="PS01015">
    <property type="entry name" value="RIBOSOMAL_L19"/>
    <property type="match status" value="1"/>
</dbReference>
<accession>P58168</accession>
<organism>
    <name type="scientific">Mesorhizobium japonicum (strain LMG 29417 / CECT 9101 / MAFF 303099)</name>
    <name type="common">Mesorhizobium loti (strain MAFF 303099)</name>
    <dbReference type="NCBI Taxonomy" id="266835"/>
    <lineage>
        <taxon>Bacteria</taxon>
        <taxon>Pseudomonadati</taxon>
        <taxon>Pseudomonadota</taxon>
        <taxon>Alphaproteobacteria</taxon>
        <taxon>Hyphomicrobiales</taxon>
        <taxon>Phyllobacteriaceae</taxon>
        <taxon>Mesorhizobium</taxon>
    </lineage>
</organism>
<protein>
    <recommendedName>
        <fullName evidence="1">Large ribosomal subunit protein bL19</fullName>
    </recommendedName>
    <alternativeName>
        <fullName evidence="3">50S ribosomal protein L19</fullName>
    </alternativeName>
</protein>
<evidence type="ECO:0000255" key="1">
    <source>
        <dbReference type="HAMAP-Rule" id="MF_00402"/>
    </source>
</evidence>
<evidence type="ECO:0000256" key="2">
    <source>
        <dbReference type="SAM" id="MobiDB-lite"/>
    </source>
</evidence>
<evidence type="ECO:0000305" key="3"/>
<gene>
    <name evidence="1" type="primary">rplS</name>
    <name type="ordered locus">mll4283</name>
</gene>
<keyword id="KW-0687">Ribonucleoprotein</keyword>
<keyword id="KW-0689">Ribosomal protein</keyword>
<sequence>MDIIRQLEAEQAAKIEAKRKLPEFQPGDTVRVQVRVTEGTRTRVQAYEGVVIARAGSGFQENFTVRKISYGEGVERVFPVFSPMVEGVEIVRRGKVRRAKLYYLRDRRGKSARISENTGVRARKLNDEERDALNAEKARIEAEKVAAAQALAAETAAKEAAEKKAAAEAEAAKAAEATPAE</sequence>
<name>RL19_RHILO</name>